<dbReference type="EC" id="4.2.1.19" evidence="1"/>
<dbReference type="EMBL" id="CP000387">
    <property type="protein sequence ID" value="ABN44838.1"/>
    <property type="molecule type" value="Genomic_DNA"/>
</dbReference>
<dbReference type="RefSeq" id="WP_011837141.1">
    <property type="nucleotide sequence ID" value="NC_009009.1"/>
</dbReference>
<dbReference type="RefSeq" id="YP_001035388.1">
    <property type="nucleotide sequence ID" value="NC_009009.1"/>
</dbReference>
<dbReference type="SMR" id="A3CNT3"/>
<dbReference type="STRING" id="388919.SSA_1445"/>
<dbReference type="KEGG" id="ssa:SSA_1445"/>
<dbReference type="PATRIC" id="fig|388919.9.peg.1370"/>
<dbReference type="eggNOG" id="COG0131">
    <property type="taxonomic scope" value="Bacteria"/>
</dbReference>
<dbReference type="HOGENOM" id="CLU_044308_2_0_9"/>
<dbReference type="OrthoDB" id="9790411at2"/>
<dbReference type="UniPathway" id="UPA00031">
    <property type="reaction ID" value="UER00011"/>
</dbReference>
<dbReference type="Proteomes" id="UP000002148">
    <property type="component" value="Chromosome"/>
</dbReference>
<dbReference type="GO" id="GO:0005737">
    <property type="term" value="C:cytoplasm"/>
    <property type="evidence" value="ECO:0007669"/>
    <property type="project" value="UniProtKB-SubCell"/>
</dbReference>
<dbReference type="GO" id="GO:0004424">
    <property type="term" value="F:imidazoleglycerol-phosphate dehydratase activity"/>
    <property type="evidence" value="ECO:0007669"/>
    <property type="project" value="UniProtKB-UniRule"/>
</dbReference>
<dbReference type="GO" id="GO:0000105">
    <property type="term" value="P:L-histidine biosynthetic process"/>
    <property type="evidence" value="ECO:0007669"/>
    <property type="project" value="UniProtKB-UniRule"/>
</dbReference>
<dbReference type="CDD" id="cd07914">
    <property type="entry name" value="IGPD"/>
    <property type="match status" value="1"/>
</dbReference>
<dbReference type="FunFam" id="3.30.230.40:FF:000001">
    <property type="entry name" value="Imidazoleglycerol-phosphate dehydratase HisB"/>
    <property type="match status" value="1"/>
</dbReference>
<dbReference type="FunFam" id="3.30.230.40:FF:000003">
    <property type="entry name" value="Imidazoleglycerol-phosphate dehydratase HisB"/>
    <property type="match status" value="1"/>
</dbReference>
<dbReference type="Gene3D" id="3.30.230.40">
    <property type="entry name" value="Imidazole glycerol phosphate dehydratase, domain 1"/>
    <property type="match status" value="2"/>
</dbReference>
<dbReference type="HAMAP" id="MF_00076">
    <property type="entry name" value="HisB"/>
    <property type="match status" value="1"/>
</dbReference>
<dbReference type="InterPro" id="IPR038494">
    <property type="entry name" value="IGPD_sf"/>
</dbReference>
<dbReference type="InterPro" id="IPR000807">
    <property type="entry name" value="ImidazoleglycerolP_deHydtase"/>
</dbReference>
<dbReference type="InterPro" id="IPR020565">
    <property type="entry name" value="ImidazoleglycerP_deHydtase_CS"/>
</dbReference>
<dbReference type="InterPro" id="IPR020568">
    <property type="entry name" value="Ribosomal_Su5_D2-typ_SF"/>
</dbReference>
<dbReference type="NCBIfam" id="NF002107">
    <property type="entry name" value="PRK00951.1-2"/>
    <property type="match status" value="1"/>
</dbReference>
<dbReference type="NCBIfam" id="NF002111">
    <property type="entry name" value="PRK00951.2-1"/>
    <property type="match status" value="1"/>
</dbReference>
<dbReference type="NCBIfam" id="NF002114">
    <property type="entry name" value="PRK00951.2-4"/>
    <property type="match status" value="1"/>
</dbReference>
<dbReference type="PANTHER" id="PTHR23133:SF2">
    <property type="entry name" value="IMIDAZOLEGLYCEROL-PHOSPHATE DEHYDRATASE"/>
    <property type="match status" value="1"/>
</dbReference>
<dbReference type="PANTHER" id="PTHR23133">
    <property type="entry name" value="IMIDAZOLEGLYCEROL-PHOSPHATE DEHYDRATASE HIS7"/>
    <property type="match status" value="1"/>
</dbReference>
<dbReference type="Pfam" id="PF00475">
    <property type="entry name" value="IGPD"/>
    <property type="match status" value="1"/>
</dbReference>
<dbReference type="SUPFAM" id="SSF54211">
    <property type="entry name" value="Ribosomal protein S5 domain 2-like"/>
    <property type="match status" value="2"/>
</dbReference>
<dbReference type="PROSITE" id="PS00954">
    <property type="entry name" value="IGP_DEHYDRATASE_1"/>
    <property type="match status" value="1"/>
</dbReference>
<dbReference type="PROSITE" id="PS00955">
    <property type="entry name" value="IGP_DEHYDRATASE_2"/>
    <property type="match status" value="1"/>
</dbReference>
<organism>
    <name type="scientific">Streptococcus sanguinis (strain SK36)</name>
    <dbReference type="NCBI Taxonomy" id="388919"/>
    <lineage>
        <taxon>Bacteria</taxon>
        <taxon>Bacillati</taxon>
        <taxon>Bacillota</taxon>
        <taxon>Bacilli</taxon>
        <taxon>Lactobacillales</taxon>
        <taxon>Streptococcaceae</taxon>
        <taxon>Streptococcus</taxon>
    </lineage>
</organism>
<reference key="1">
    <citation type="journal article" date="2007" name="J. Bacteriol.">
        <title>Genome of the opportunistic pathogen Streptococcus sanguinis.</title>
        <authorList>
            <person name="Xu P."/>
            <person name="Alves J.M."/>
            <person name="Kitten T."/>
            <person name="Brown A."/>
            <person name="Chen Z."/>
            <person name="Ozaki L.S."/>
            <person name="Manque P."/>
            <person name="Ge X."/>
            <person name="Serrano M.G."/>
            <person name="Puiu D."/>
            <person name="Hendricks S."/>
            <person name="Wang Y."/>
            <person name="Chaplin M.D."/>
            <person name="Akan D."/>
            <person name="Paik S."/>
            <person name="Peterson D.L."/>
            <person name="Macrina F.L."/>
            <person name="Buck G.A."/>
        </authorList>
    </citation>
    <scope>NUCLEOTIDE SEQUENCE [LARGE SCALE GENOMIC DNA]</scope>
    <source>
        <strain>SK36</strain>
    </source>
</reference>
<proteinExistence type="inferred from homology"/>
<protein>
    <recommendedName>
        <fullName evidence="1">Imidazoleglycerol-phosphate dehydratase</fullName>
        <shortName evidence="1">IGPD</shortName>
        <ecNumber evidence="1">4.2.1.19</ecNumber>
    </recommendedName>
</protein>
<evidence type="ECO:0000255" key="1">
    <source>
        <dbReference type="HAMAP-Rule" id="MF_00076"/>
    </source>
</evidence>
<keyword id="KW-0028">Amino-acid biosynthesis</keyword>
<keyword id="KW-0963">Cytoplasm</keyword>
<keyword id="KW-0368">Histidine biosynthesis</keyword>
<keyword id="KW-0456">Lyase</keyword>
<keyword id="KW-1185">Reference proteome</keyword>
<name>HIS7_STRSV</name>
<gene>
    <name evidence="1" type="primary">hisB</name>
    <name type="ordered locus">SSA_1445</name>
</gene>
<feature type="chain" id="PRO_1000010360" description="Imidazoleglycerol-phosphate dehydratase">
    <location>
        <begin position="1"/>
        <end position="194"/>
    </location>
</feature>
<sequence>MRQAEIKRKTQETDIELAVNLDQQEPVAIETGVGFFDHMLTLFARHSRISLTVKAEGDLWVDSHHTVEDVGIVLGQALRQALGDKAGINRYGTSFVPMDETLGMASLDLSGRSYLVFEADFDNPKLGNFETELVEEFFQALAFNLQMNLHLKILHGKNSHHKAESLFKATGRALREAITINPEIHGVNSTKGLL</sequence>
<accession>A3CNT3</accession>
<comment type="catalytic activity">
    <reaction evidence="1">
        <text>D-erythro-1-(imidazol-4-yl)glycerol 3-phosphate = 3-(imidazol-4-yl)-2-oxopropyl phosphate + H2O</text>
        <dbReference type="Rhea" id="RHEA:11040"/>
        <dbReference type="ChEBI" id="CHEBI:15377"/>
        <dbReference type="ChEBI" id="CHEBI:57766"/>
        <dbReference type="ChEBI" id="CHEBI:58278"/>
        <dbReference type="EC" id="4.2.1.19"/>
    </reaction>
</comment>
<comment type="pathway">
    <text evidence="1">Amino-acid biosynthesis; L-histidine biosynthesis; L-histidine from 5-phospho-alpha-D-ribose 1-diphosphate: step 6/9.</text>
</comment>
<comment type="subcellular location">
    <subcellularLocation>
        <location evidence="1">Cytoplasm</location>
    </subcellularLocation>
</comment>
<comment type="similarity">
    <text evidence="1">Belongs to the imidazoleglycerol-phosphate dehydratase family.</text>
</comment>